<dbReference type="EC" id="4.1.1.19"/>
<dbReference type="EMBL" id="Y18930">
    <property type="protein sequence ID" value="CAB57763.1"/>
    <property type="molecule type" value="Genomic_DNA"/>
</dbReference>
<dbReference type="EMBL" id="AE006641">
    <property type="protein sequence ID" value="AAK40855.1"/>
    <property type="molecule type" value="Genomic_DNA"/>
</dbReference>
<dbReference type="PIR" id="H90199">
    <property type="entry name" value="H90199"/>
</dbReference>
<dbReference type="SMR" id="Q9UWU1"/>
<dbReference type="FunCoup" id="Q9UWU1">
    <property type="interactions" value="22"/>
</dbReference>
<dbReference type="STRING" id="273057.SSO0536"/>
<dbReference type="PaxDb" id="273057-SSO0536"/>
<dbReference type="EnsemblBacteria" id="AAK40855">
    <property type="protein sequence ID" value="AAK40855"/>
    <property type="gene ID" value="SSO0536"/>
</dbReference>
<dbReference type="KEGG" id="sso:SSO0536"/>
<dbReference type="PATRIC" id="fig|273057.12.peg.534"/>
<dbReference type="eggNOG" id="arCOG00279">
    <property type="taxonomic scope" value="Archaea"/>
</dbReference>
<dbReference type="HOGENOM" id="CLU_125470_2_1_2"/>
<dbReference type="InParanoid" id="Q9UWU1"/>
<dbReference type="PhylomeDB" id="Q9UWU1"/>
<dbReference type="BRENDA" id="4.1.1.19">
    <property type="organism ID" value="6163"/>
</dbReference>
<dbReference type="SABIO-RK" id="Q9UWU1"/>
<dbReference type="UniPathway" id="UPA00186">
    <property type="reaction ID" value="UER00284"/>
</dbReference>
<dbReference type="Proteomes" id="UP000001974">
    <property type="component" value="Chromosome"/>
</dbReference>
<dbReference type="GO" id="GO:0005829">
    <property type="term" value="C:cytosol"/>
    <property type="evidence" value="ECO:0000318"/>
    <property type="project" value="GO_Central"/>
</dbReference>
<dbReference type="GO" id="GO:0008792">
    <property type="term" value="F:arginine decarboxylase activity"/>
    <property type="evidence" value="ECO:0007669"/>
    <property type="project" value="UniProtKB-UniRule"/>
</dbReference>
<dbReference type="GO" id="GO:0006527">
    <property type="term" value="P:arginine catabolic process"/>
    <property type="evidence" value="ECO:0007669"/>
    <property type="project" value="UniProtKB-UniRule"/>
</dbReference>
<dbReference type="GO" id="GO:0006596">
    <property type="term" value="P:polyamine biosynthetic process"/>
    <property type="evidence" value="ECO:0007669"/>
    <property type="project" value="UniProtKB-UniRule"/>
</dbReference>
<dbReference type="FunFam" id="3.60.90.10:FF:000005">
    <property type="entry name" value="Arginine decarboxylase proenzyme"/>
    <property type="match status" value="1"/>
</dbReference>
<dbReference type="Gene3D" id="3.60.90.10">
    <property type="entry name" value="S-adenosylmethionine decarboxylase"/>
    <property type="match status" value="1"/>
</dbReference>
<dbReference type="HAMAP" id="MF_00464">
    <property type="entry name" value="AdoMetDC_1"/>
    <property type="match status" value="1"/>
</dbReference>
<dbReference type="HAMAP" id="MF_01298">
    <property type="entry name" value="ArgDC"/>
    <property type="match status" value="1"/>
</dbReference>
<dbReference type="InterPro" id="IPR003826">
    <property type="entry name" value="AdoMetDC_fam_prok"/>
</dbReference>
<dbReference type="InterPro" id="IPR027549">
    <property type="entry name" value="ArgDC"/>
</dbReference>
<dbReference type="InterPro" id="IPR016067">
    <property type="entry name" value="S-AdoMet_deCO2ase_core"/>
</dbReference>
<dbReference type="InterPro" id="IPR017716">
    <property type="entry name" value="S-AdoMet_deCOase_pro-enz"/>
</dbReference>
<dbReference type="NCBIfam" id="TIGR03330">
    <property type="entry name" value="SAM_DCase_Bsu"/>
    <property type="match status" value="1"/>
</dbReference>
<dbReference type="PANTHER" id="PTHR33866">
    <property type="entry name" value="S-ADENOSYLMETHIONINE DECARBOXYLASE PROENZYME"/>
    <property type="match status" value="1"/>
</dbReference>
<dbReference type="PANTHER" id="PTHR33866:SF2">
    <property type="entry name" value="S-ADENOSYLMETHIONINE DECARBOXYLASE PROENZYME"/>
    <property type="match status" value="1"/>
</dbReference>
<dbReference type="Pfam" id="PF02675">
    <property type="entry name" value="AdoMet_dc"/>
    <property type="match status" value="1"/>
</dbReference>
<dbReference type="SUPFAM" id="SSF56276">
    <property type="entry name" value="S-adenosylmethionine decarboxylase"/>
    <property type="match status" value="1"/>
</dbReference>
<reference key="1">
    <citation type="journal article" date="2000" name="Genome">
        <title>Gene content and organization of a 281-kbp contig from the genome of the extremely thermophilic archaeon, Sulfolobus solfataricus P2.</title>
        <authorList>
            <person name="Charlebois R.L."/>
            <person name="Singh R.K."/>
            <person name="Chan-Weiher C.C.-Y."/>
            <person name="Allard G."/>
            <person name="Chow C."/>
            <person name="Confalonieri F."/>
            <person name="Curtis B."/>
            <person name="Duguet M."/>
            <person name="Erauso G."/>
            <person name="Faguy D."/>
            <person name="Gaasterland T."/>
            <person name="Garrett R.A."/>
            <person name="Gordon P."/>
            <person name="Jeffries A.C."/>
            <person name="Kozera C."/>
            <person name="Kushwaha N."/>
            <person name="Lafleur E."/>
            <person name="Medina N."/>
            <person name="Peng X."/>
            <person name="Penny S.L."/>
            <person name="She Q."/>
            <person name="St Jean A."/>
            <person name="van der Oost J."/>
            <person name="Young F."/>
            <person name="Zivanovic Y."/>
            <person name="Doolittle W.F."/>
            <person name="Ragan M.A."/>
            <person name="Sensen C.W."/>
        </authorList>
    </citation>
    <scope>NUCLEOTIDE SEQUENCE [LARGE SCALE GENOMIC DNA]</scope>
    <source>
        <strain>ATCC 35092 / DSM 1617 / JCM 11322 / P2</strain>
    </source>
</reference>
<reference key="2">
    <citation type="journal article" date="2001" name="Proc. Natl. Acad. Sci. U.S.A.">
        <title>The complete genome of the crenarchaeon Sulfolobus solfataricus P2.</title>
        <authorList>
            <person name="She Q."/>
            <person name="Singh R.K."/>
            <person name="Confalonieri F."/>
            <person name="Zivanovic Y."/>
            <person name="Allard G."/>
            <person name="Awayez M.J."/>
            <person name="Chan-Weiher C.C.-Y."/>
            <person name="Clausen I.G."/>
            <person name="Curtis B.A."/>
            <person name="De Moors A."/>
            <person name="Erauso G."/>
            <person name="Fletcher C."/>
            <person name="Gordon P.M.K."/>
            <person name="Heikamp-de Jong I."/>
            <person name="Jeffries A.C."/>
            <person name="Kozera C.J."/>
            <person name="Medina N."/>
            <person name="Peng X."/>
            <person name="Thi-Ngoc H.P."/>
            <person name="Redder P."/>
            <person name="Schenk M.E."/>
            <person name="Theriault C."/>
            <person name="Tolstrup N."/>
            <person name="Charlebois R.L."/>
            <person name="Doolittle W.F."/>
            <person name="Duguet M."/>
            <person name="Gaasterland T."/>
            <person name="Garrett R.A."/>
            <person name="Ragan M.A."/>
            <person name="Sensen C.W."/>
            <person name="Van der Oost J."/>
        </authorList>
    </citation>
    <scope>NUCLEOTIDE SEQUENCE [LARGE SCALE GENOMIC DNA]</scope>
    <source>
        <strain>ATCC 35092 / DSM 1617 / JCM 11322 / P2</strain>
    </source>
</reference>
<reference key="3">
    <citation type="journal article" date="2008" name="J. Biol. Chem.">
        <title>Crenarchaeal arginine decarboxylase evolved from an S-adenosylmethionine decarboxylase enzyme.</title>
        <authorList>
            <person name="Giles T.N."/>
            <person name="Graham D.E."/>
        </authorList>
    </citation>
    <scope>FUNCTION</scope>
    <scope>CATALYTIC ACTIVITY</scope>
    <scope>COFACTOR</scope>
    <scope>ACTIVITY REGULATION</scope>
    <scope>BIOPHYSICOCHEMICAL PROPERTIES</scope>
    <scope>SUBSTRATE SPECIFICITY</scope>
    <scope>SUBUNIT</scope>
    <scope>MASS SPECTROMETRY</scope>
    <scope>SELF-PROCESSING</scope>
    <scope>CLEAVAGE SITE</scope>
    <scope>PYRUVATE FORMATION AT SER-82</scope>
    <source>
        <strain>ATCC 35092 / DSM 1617 / JCM 11322 / P2</strain>
    </source>
</reference>
<feature type="chain" id="PRO_0000030149" description="Arginine decarboxylase beta chain">
    <location>
        <begin position="1"/>
        <end position="81"/>
    </location>
</feature>
<feature type="chain" id="PRO_0000030150" description="Arginine decarboxylase alpha chain">
    <location>
        <begin position="82"/>
        <end position="134"/>
    </location>
</feature>
<feature type="active site" description="Schiff-base intermediate with substrate; via pyruvic acid" evidence="1">
    <location>
        <position position="82"/>
    </location>
</feature>
<feature type="active site" description="Proton acceptor; for processing activity" evidence="1">
    <location>
        <position position="87"/>
    </location>
</feature>
<feature type="active site" description="Proton donor; for catalytic activity" evidence="1">
    <location>
        <position position="102"/>
    </location>
</feature>
<feature type="site" description="Cleavage (non-hydrolytic); by autolysis">
    <location>
        <begin position="81"/>
        <end position="82"/>
    </location>
</feature>
<feature type="modified residue" description="Pyruvic acid (Ser); by autocatalysis" evidence="2">
    <location>
        <position position="82"/>
    </location>
</feature>
<name>ARGDC_SACS2</name>
<sequence length="134" mass="15247">MSEREVLQKINSPEGKEDRIIGKHVFGNLYDIDAERLNDKEFLEKLVLEAVDIAHMKLVEIKAWSFGGKKGGVSVIALVEESHIALHTWNEYNYATLDVYTCGEDSDPQSAFAHIVNALNPKRYQMFYADRSSQ</sequence>
<organism>
    <name type="scientific">Saccharolobus solfataricus (strain ATCC 35092 / DSM 1617 / JCM 11322 / P2)</name>
    <name type="common">Sulfolobus solfataricus</name>
    <dbReference type="NCBI Taxonomy" id="273057"/>
    <lineage>
        <taxon>Archaea</taxon>
        <taxon>Thermoproteota</taxon>
        <taxon>Thermoprotei</taxon>
        <taxon>Sulfolobales</taxon>
        <taxon>Sulfolobaceae</taxon>
        <taxon>Saccharolobus</taxon>
    </lineage>
</organism>
<comment type="function">
    <text evidence="2">Specifically catalyzes the decarboxylation of L-arginine to agmatine. Is also able to decarboxylate L-canavanine, although less efficiently. Has no S-adenosylmethionine decarboxylase (AdoMetDC) activity.</text>
</comment>
<comment type="catalytic activity">
    <reaction evidence="2">
        <text>L-arginine + H(+) = agmatine + CO2</text>
        <dbReference type="Rhea" id="RHEA:17641"/>
        <dbReference type="ChEBI" id="CHEBI:15378"/>
        <dbReference type="ChEBI" id="CHEBI:16526"/>
        <dbReference type="ChEBI" id="CHEBI:32682"/>
        <dbReference type="ChEBI" id="CHEBI:58145"/>
        <dbReference type="EC" id="4.1.1.19"/>
    </reaction>
</comment>
<comment type="cofactor">
    <cofactor evidence="2">
        <name>pyruvate</name>
        <dbReference type="ChEBI" id="CHEBI:15361"/>
    </cofactor>
    <text evidence="2">Binds 1 pyruvoyl group covalently per subunit.</text>
</comment>
<comment type="activity regulation">
    <text evidence="2">Highly competitively inhibited by L-argininamide and L-arginine methyl ester. Also inhibited by alpha-difluoromethylarginine. Is not stimulated by potassium chloride as observed for other decarboxylases.</text>
</comment>
<comment type="biophysicochemical properties">
    <kinetics>
        <KM evidence="2">150 uM for L-arginine</KM>
        <Vmax evidence="2">1.1 umol/min/mg enzyme</Vmax>
    </kinetics>
    <phDependence>
        <text evidence="2">Optimum pH is 6.</text>
    </phDependence>
    <temperatureDependence>
        <text evidence="2">Optimum temperature is 80 degrees Celsius. Highly thermostable. Retains 80% activity after incubation at 90 degrees Celsius for 10 minutes.</text>
    </temperatureDependence>
</comment>
<comment type="pathway">
    <text>Amine and polyamine biosynthesis; agmatine biosynthesis; agmatine from L-arginine: step 1/1.</text>
</comment>
<comment type="subunit">
    <text evidence="2">Heterooctamer of four alpha and four beta chains arranged as a tetramer of alpha/beta heterodimers.</text>
</comment>
<comment type="PTM">
    <text evidence="2">Is synthesized initially as an inactive proenzyme. Formation of the active enzyme involves a self-maturation process in which the active site pyruvoyl group is generated from an internal serine residue via an autocatalytic post-translational modification. Two non-identical subunits are generated from the proenzyme in this reaction, and the pyruvate is formed at the N-terminus of the alpha chain, which is derived from the carboxyl end of the proenzyme. The post-translation cleavage follows an unusual pathway, termed non-hydrolytic serinolysis, in which the side chain hydroxyl group of the serine supplies its oxygen atom to form the C-terminus of the beta chain, while the remainder of the serine residue undergoes an oxidative deamination to produce ammonia and the pyruvoyl group blocking the N-terminus of the alpha chain.</text>
</comment>
<comment type="mass spectrometry" mass="6123.0" method="Electrospray" evidence="2">
    <molecule>Arginine decarboxylase alpha chain</molecule>
    <text>Pyruvoyl group-containing alpha subunit.</text>
</comment>
<comment type="miscellaneous">
    <text>A chimeric protein containing the beta subunit of SSO0536 and the alpha subunit of SSO0585 (SpeH) has ArgDC activity and no AdoMetDC activity, implicating residues responsible for substrate specificity in the beta subunit. But additional factors in the alpha subunit are required for efficient cleavage and turnover.</text>
</comment>
<comment type="similarity">
    <text evidence="3">Belongs to the prokaryotic AdoMetDC family. Type 1 subfamily.</text>
</comment>
<keyword id="KW-0068">Autocatalytic cleavage</keyword>
<keyword id="KW-0210">Decarboxylase</keyword>
<keyword id="KW-0456">Lyase</keyword>
<keyword id="KW-0620">Polyamine biosynthesis</keyword>
<keyword id="KW-0670">Pyruvate</keyword>
<keyword id="KW-1185">Reference proteome</keyword>
<keyword id="KW-0704">Schiff base</keyword>
<keyword id="KW-0865">Zymogen</keyword>
<accession>Q9UWU1</accession>
<protein>
    <recommendedName>
        <fullName>Arginine decarboxylase proenzyme</fullName>
        <shortName>ADC</shortName>
        <shortName>ArgDC</shortName>
        <ecNumber>4.1.1.19</ecNumber>
    </recommendedName>
    <alternativeName>
        <fullName>Pyruvoyl-dependent arginine decarboxylase</fullName>
    </alternativeName>
    <component>
        <recommendedName>
            <fullName>Arginine decarboxylase beta chain</fullName>
        </recommendedName>
    </component>
    <component>
        <recommendedName>
            <fullName>Arginine decarboxylase alpha chain</fullName>
        </recommendedName>
    </component>
</protein>
<gene>
    <name type="ordered locus">SSO0536</name>
    <name type="ORF">C22_015</name>
</gene>
<evidence type="ECO:0000250" key="1"/>
<evidence type="ECO:0000269" key="2">
    <source>
    </source>
</evidence>
<evidence type="ECO:0000305" key="3"/>
<proteinExistence type="evidence at protein level"/>